<reference key="1">
    <citation type="journal article" date="2007" name="PLoS Genet.">
        <title>Meningococcal genetic variation mechanisms viewed through comparative analysis of serogroup C strain FAM18.</title>
        <authorList>
            <person name="Bentley S.D."/>
            <person name="Vernikos G.S."/>
            <person name="Snyder L.A.S."/>
            <person name="Churcher C."/>
            <person name="Arrowsmith C."/>
            <person name="Chillingworth T."/>
            <person name="Cronin A."/>
            <person name="Davis P.H."/>
            <person name="Holroyd N.E."/>
            <person name="Jagels K."/>
            <person name="Maddison M."/>
            <person name="Moule S."/>
            <person name="Rabbinowitsch E."/>
            <person name="Sharp S."/>
            <person name="Unwin L."/>
            <person name="Whitehead S."/>
            <person name="Quail M.A."/>
            <person name="Achtman M."/>
            <person name="Barrell B.G."/>
            <person name="Saunders N.J."/>
            <person name="Parkhill J."/>
        </authorList>
    </citation>
    <scope>NUCLEOTIDE SEQUENCE [LARGE SCALE GENOMIC DNA]</scope>
    <source>
        <strain>ATCC 700532 / DSM 15464 / FAM18</strain>
    </source>
</reference>
<keyword id="KW-0963">Cytoplasm</keyword>
<keyword id="KW-0444">Lipid biosynthesis</keyword>
<keyword id="KW-0443">Lipid metabolism</keyword>
<keyword id="KW-0594">Phospholipid biosynthesis</keyword>
<keyword id="KW-1208">Phospholipid metabolism</keyword>
<keyword id="KW-0808">Transferase</keyword>
<accession>A1KRZ2</accession>
<gene>
    <name evidence="1" type="primary">plsX</name>
    <name type="ordered locus">NMC0310</name>
</gene>
<dbReference type="EC" id="2.3.1.274" evidence="1"/>
<dbReference type="EMBL" id="AM421808">
    <property type="protein sequence ID" value="CAM09621.1"/>
    <property type="molecule type" value="Genomic_DNA"/>
</dbReference>
<dbReference type="RefSeq" id="WP_002221557.1">
    <property type="nucleotide sequence ID" value="NC_008767.1"/>
</dbReference>
<dbReference type="SMR" id="A1KRZ2"/>
<dbReference type="KEGG" id="nmc:NMC0310"/>
<dbReference type="HOGENOM" id="CLU_039379_1_0_4"/>
<dbReference type="UniPathway" id="UPA00085"/>
<dbReference type="Proteomes" id="UP000002286">
    <property type="component" value="Chromosome"/>
</dbReference>
<dbReference type="GO" id="GO:0005737">
    <property type="term" value="C:cytoplasm"/>
    <property type="evidence" value="ECO:0007669"/>
    <property type="project" value="UniProtKB-SubCell"/>
</dbReference>
<dbReference type="GO" id="GO:0043811">
    <property type="term" value="F:phosphate:acyl-[acyl carrier protein] acyltransferase activity"/>
    <property type="evidence" value="ECO:0007669"/>
    <property type="project" value="UniProtKB-UniRule"/>
</dbReference>
<dbReference type="GO" id="GO:0006633">
    <property type="term" value="P:fatty acid biosynthetic process"/>
    <property type="evidence" value="ECO:0007669"/>
    <property type="project" value="UniProtKB-UniRule"/>
</dbReference>
<dbReference type="GO" id="GO:0008654">
    <property type="term" value="P:phospholipid biosynthetic process"/>
    <property type="evidence" value="ECO:0007669"/>
    <property type="project" value="UniProtKB-KW"/>
</dbReference>
<dbReference type="Gene3D" id="3.40.718.10">
    <property type="entry name" value="Isopropylmalate Dehydrogenase"/>
    <property type="match status" value="1"/>
</dbReference>
<dbReference type="HAMAP" id="MF_00019">
    <property type="entry name" value="PlsX"/>
    <property type="match status" value="1"/>
</dbReference>
<dbReference type="InterPro" id="IPR003664">
    <property type="entry name" value="FA_synthesis"/>
</dbReference>
<dbReference type="InterPro" id="IPR012281">
    <property type="entry name" value="Phospholipid_synth_PlsX-like"/>
</dbReference>
<dbReference type="NCBIfam" id="TIGR00182">
    <property type="entry name" value="plsX"/>
    <property type="match status" value="1"/>
</dbReference>
<dbReference type="PANTHER" id="PTHR30100">
    <property type="entry name" value="FATTY ACID/PHOSPHOLIPID SYNTHESIS PROTEIN PLSX"/>
    <property type="match status" value="1"/>
</dbReference>
<dbReference type="PANTHER" id="PTHR30100:SF1">
    <property type="entry name" value="PHOSPHATE ACYLTRANSFERASE"/>
    <property type="match status" value="1"/>
</dbReference>
<dbReference type="Pfam" id="PF02504">
    <property type="entry name" value="FA_synthesis"/>
    <property type="match status" value="1"/>
</dbReference>
<dbReference type="PIRSF" id="PIRSF002465">
    <property type="entry name" value="Phsphlp_syn_PlsX"/>
    <property type="match status" value="1"/>
</dbReference>
<dbReference type="SUPFAM" id="SSF53659">
    <property type="entry name" value="Isocitrate/Isopropylmalate dehydrogenase-like"/>
    <property type="match status" value="1"/>
</dbReference>
<proteinExistence type="inferred from homology"/>
<comment type="function">
    <text evidence="1">Catalyzes the reversible formation of acyl-phosphate (acyl-PO(4)) from acyl-[acyl-carrier-protein] (acyl-ACP). This enzyme utilizes acyl-ACP as fatty acyl donor, but not acyl-CoA.</text>
</comment>
<comment type="catalytic activity">
    <reaction evidence="1">
        <text>a fatty acyl-[ACP] + phosphate = an acyl phosphate + holo-[ACP]</text>
        <dbReference type="Rhea" id="RHEA:42292"/>
        <dbReference type="Rhea" id="RHEA-COMP:9685"/>
        <dbReference type="Rhea" id="RHEA-COMP:14125"/>
        <dbReference type="ChEBI" id="CHEBI:43474"/>
        <dbReference type="ChEBI" id="CHEBI:59918"/>
        <dbReference type="ChEBI" id="CHEBI:64479"/>
        <dbReference type="ChEBI" id="CHEBI:138651"/>
        <dbReference type="EC" id="2.3.1.274"/>
    </reaction>
</comment>
<comment type="pathway">
    <text evidence="1">Lipid metabolism; phospholipid metabolism.</text>
</comment>
<comment type="subunit">
    <text evidence="1">Homodimer. Probably interacts with PlsY.</text>
</comment>
<comment type="subcellular location">
    <subcellularLocation>
        <location evidence="1">Cytoplasm</location>
    </subcellularLocation>
    <text evidence="1">Associated with the membrane possibly through PlsY.</text>
</comment>
<comment type="similarity">
    <text evidence="1">Belongs to the PlsX family.</text>
</comment>
<feature type="chain" id="PRO_1000001791" description="Phosphate acyltransferase">
    <location>
        <begin position="1"/>
        <end position="351"/>
    </location>
</feature>
<sequence>MITLAVDAMGGDQGLAVTVPGATAFLQAHPDVRLIMTGDETQLRQALTAAGAPMERIDICHTTQVVGMDESPQSALKNKKDSSMRVAINQVKEGKAQAAVSAGNTGALMATARFVLKTIPGIERPAIAKFLPSDTDHVTLALDLGANVDCTPEQLAQFAVIGSELVHALHPQKGQPRVGLVNVGTEDIKGTDTVKQTYKLLQNSKLNFIGNIESNGILYGEADVVVADGFVGNVMLKTIEGAVKFMSGAIRREFQSNLFNKLAAVAALPALKGLKNKLDPRKFNGAILLGLRGIVIKSHGGTDETGFRYALEEAYHEAKSAGLSKIEQGVAEQLAALETAKAVQNENADGL</sequence>
<evidence type="ECO:0000255" key="1">
    <source>
        <dbReference type="HAMAP-Rule" id="MF_00019"/>
    </source>
</evidence>
<protein>
    <recommendedName>
        <fullName evidence="1">Phosphate acyltransferase</fullName>
        <ecNumber evidence="1">2.3.1.274</ecNumber>
    </recommendedName>
    <alternativeName>
        <fullName evidence="1">Acyl-ACP phosphotransacylase</fullName>
    </alternativeName>
    <alternativeName>
        <fullName evidence="1">Acyl-[acyl-carrier-protein]--phosphate acyltransferase</fullName>
    </alternativeName>
    <alternativeName>
        <fullName evidence="1">Phosphate-acyl-ACP acyltransferase</fullName>
    </alternativeName>
</protein>
<name>PLSX_NEIMF</name>
<organism>
    <name type="scientific">Neisseria meningitidis serogroup C / serotype 2a (strain ATCC 700532 / DSM 15464 / FAM18)</name>
    <dbReference type="NCBI Taxonomy" id="272831"/>
    <lineage>
        <taxon>Bacteria</taxon>
        <taxon>Pseudomonadati</taxon>
        <taxon>Pseudomonadota</taxon>
        <taxon>Betaproteobacteria</taxon>
        <taxon>Neisseriales</taxon>
        <taxon>Neisseriaceae</taxon>
        <taxon>Neisseria</taxon>
    </lineage>
</organism>